<sequence length="259" mass="28052">MKNYKAYLIDLDGTMYKGNEEIDGAAQFISYLNNQNIPHLYVTNNSTKEPEEVASKLNTMGIVAQADEVVTSALATAEFIAEESPGATVYMLGGSGLSNALTAQGLVLKDDEFVDYVVVGLDEQVTYEKLSTATLGVRNGAKFISTNQDVSIPKERGFLPGNGAITSVVSVSTGVQPVFIGKPEPIIMNKALEILDLDRSDVAMVGDLYDTDIMSGINVDIDTIHVQTGVTTKEEIEKKSVPPTYTFKDLNEVIKELEK</sequence>
<name>NAGD_STAS1</name>
<protein>
    <recommendedName>
        <fullName evidence="1">Acid sugar phosphatase</fullName>
        <ecNumber evidence="1">3.1.3.-</ecNumber>
    </recommendedName>
</protein>
<organism>
    <name type="scientific">Staphylococcus saprophyticus subsp. saprophyticus (strain ATCC 15305 / DSM 20229 / NCIMB 8711 / NCTC 7292 / S-41)</name>
    <dbReference type="NCBI Taxonomy" id="342451"/>
    <lineage>
        <taxon>Bacteria</taxon>
        <taxon>Bacillati</taxon>
        <taxon>Bacillota</taxon>
        <taxon>Bacilli</taxon>
        <taxon>Bacillales</taxon>
        <taxon>Staphylococcaceae</taxon>
        <taxon>Staphylococcus</taxon>
    </lineage>
</organism>
<feature type="chain" id="PRO_0000271492" description="Acid sugar phosphatase">
    <location>
        <begin position="1"/>
        <end position="259"/>
    </location>
</feature>
<keyword id="KW-0378">Hydrolase</keyword>
<keyword id="KW-0460">Magnesium</keyword>
<keyword id="KW-0479">Metal-binding</keyword>
<keyword id="KW-1185">Reference proteome</keyword>
<dbReference type="EC" id="3.1.3.-" evidence="1"/>
<dbReference type="EMBL" id="AP008934">
    <property type="protein sequence ID" value="BAE18991.1"/>
    <property type="molecule type" value="Genomic_DNA"/>
</dbReference>
<dbReference type="RefSeq" id="WP_002483823.1">
    <property type="nucleotide sequence ID" value="NZ_MTGA01000039.1"/>
</dbReference>
<dbReference type="SMR" id="Q49W68"/>
<dbReference type="GeneID" id="3615507"/>
<dbReference type="KEGG" id="ssp:SSP1846"/>
<dbReference type="PATRIC" id="fig|342451.11.peg.1842"/>
<dbReference type="eggNOG" id="COG0647">
    <property type="taxonomic scope" value="Bacteria"/>
</dbReference>
<dbReference type="HOGENOM" id="CLU_043473_1_1_9"/>
<dbReference type="OrthoDB" id="9810449at2"/>
<dbReference type="Proteomes" id="UP000006371">
    <property type="component" value="Chromosome"/>
</dbReference>
<dbReference type="GO" id="GO:0005737">
    <property type="term" value="C:cytoplasm"/>
    <property type="evidence" value="ECO:0007669"/>
    <property type="project" value="TreeGrafter"/>
</dbReference>
<dbReference type="GO" id="GO:0046872">
    <property type="term" value="F:metal ion binding"/>
    <property type="evidence" value="ECO:0007669"/>
    <property type="project" value="UniProtKB-KW"/>
</dbReference>
<dbReference type="GO" id="GO:0016791">
    <property type="term" value="F:phosphatase activity"/>
    <property type="evidence" value="ECO:0007669"/>
    <property type="project" value="TreeGrafter"/>
</dbReference>
<dbReference type="CDD" id="cd07530">
    <property type="entry name" value="HAD_Pase_UmpH-like"/>
    <property type="match status" value="1"/>
</dbReference>
<dbReference type="FunFam" id="3.40.50.1000:FF:000053">
    <property type="entry name" value="TIGR01457 family HAD hydrolase"/>
    <property type="match status" value="1"/>
</dbReference>
<dbReference type="Gene3D" id="3.40.50.1000">
    <property type="entry name" value="HAD superfamily/HAD-like"/>
    <property type="match status" value="2"/>
</dbReference>
<dbReference type="InterPro" id="IPR036412">
    <property type="entry name" value="HAD-like_sf"/>
</dbReference>
<dbReference type="InterPro" id="IPR006357">
    <property type="entry name" value="HAD-SF_hydro_IIA"/>
</dbReference>
<dbReference type="InterPro" id="IPR006354">
    <property type="entry name" value="HAD-SF_hydro_IIA_hyp1"/>
</dbReference>
<dbReference type="InterPro" id="IPR023214">
    <property type="entry name" value="HAD_sf"/>
</dbReference>
<dbReference type="NCBIfam" id="TIGR01460">
    <property type="entry name" value="HAD-SF-IIA"/>
    <property type="match status" value="1"/>
</dbReference>
<dbReference type="NCBIfam" id="TIGR01457">
    <property type="entry name" value="HAD-SF-IIA-hyp2"/>
    <property type="match status" value="1"/>
</dbReference>
<dbReference type="PANTHER" id="PTHR19288">
    <property type="entry name" value="4-NITROPHENYLPHOSPHATASE-RELATED"/>
    <property type="match status" value="1"/>
</dbReference>
<dbReference type="PANTHER" id="PTHR19288:SF46">
    <property type="entry name" value="HALOACID DEHALOGENASE-LIKE HYDROLASE DOMAIN-CONTAINING PROTEIN 2"/>
    <property type="match status" value="1"/>
</dbReference>
<dbReference type="Pfam" id="PF13344">
    <property type="entry name" value="Hydrolase_6"/>
    <property type="match status" value="1"/>
</dbReference>
<dbReference type="Pfam" id="PF13242">
    <property type="entry name" value="Hydrolase_like"/>
    <property type="match status" value="1"/>
</dbReference>
<dbReference type="PIRSF" id="PIRSF000915">
    <property type="entry name" value="PGP-type_phosphatase"/>
    <property type="match status" value="1"/>
</dbReference>
<dbReference type="SFLD" id="SFLDG01139">
    <property type="entry name" value="C2.A:_Pyridoxal_Phosphate_Phos"/>
    <property type="match status" value="1"/>
</dbReference>
<dbReference type="SFLD" id="SFLDS00003">
    <property type="entry name" value="Haloacid_Dehalogenase"/>
    <property type="match status" value="1"/>
</dbReference>
<dbReference type="SUPFAM" id="SSF56784">
    <property type="entry name" value="HAD-like"/>
    <property type="match status" value="1"/>
</dbReference>
<evidence type="ECO:0000250" key="1">
    <source>
        <dbReference type="UniProtKB" id="Q99VE8"/>
    </source>
</evidence>
<evidence type="ECO:0000305" key="2"/>
<gene>
    <name type="primary">nagD</name>
    <name type="ordered locus">SSP1846</name>
</gene>
<proteinExistence type="inferred from homology"/>
<comment type="function">
    <text evidence="1">Catalyzes the dephosphorylation of 2-6 carbon acid sugars in vitro.</text>
</comment>
<comment type="cofactor">
    <cofactor evidence="1">
        <name>Mg(2+)</name>
        <dbReference type="ChEBI" id="CHEBI:18420"/>
    </cofactor>
</comment>
<comment type="similarity">
    <text evidence="2">Belongs to the HAD-like hydrolase superfamily. NagD family.</text>
</comment>
<reference key="1">
    <citation type="journal article" date="2005" name="Proc. Natl. Acad. Sci. U.S.A.">
        <title>Whole genome sequence of Staphylococcus saprophyticus reveals the pathogenesis of uncomplicated urinary tract infection.</title>
        <authorList>
            <person name="Kuroda M."/>
            <person name="Yamashita A."/>
            <person name="Hirakawa H."/>
            <person name="Kumano M."/>
            <person name="Morikawa K."/>
            <person name="Higashide M."/>
            <person name="Maruyama A."/>
            <person name="Inose Y."/>
            <person name="Matoba K."/>
            <person name="Toh H."/>
            <person name="Kuhara S."/>
            <person name="Hattori M."/>
            <person name="Ohta T."/>
        </authorList>
    </citation>
    <scope>NUCLEOTIDE SEQUENCE [LARGE SCALE GENOMIC DNA]</scope>
    <source>
        <strain>ATCC 15305 / DSM 20229 / NCIMB 8711 / NCTC 7292 / S-41</strain>
    </source>
</reference>
<accession>Q49W68</accession>